<proteinExistence type="inferred from homology"/>
<keyword id="KW-0665">Pyrimidine biosynthesis</keyword>
<keyword id="KW-0808">Transferase</keyword>
<accession>C4KHQ2</accession>
<organism>
    <name type="scientific">Saccharolobus islandicus (strain M.16.4 / Kamchatka #3)</name>
    <name type="common">Sulfolobus islandicus</name>
    <dbReference type="NCBI Taxonomy" id="426118"/>
    <lineage>
        <taxon>Archaea</taxon>
        <taxon>Thermoproteota</taxon>
        <taxon>Thermoprotei</taxon>
        <taxon>Sulfolobales</taxon>
        <taxon>Sulfolobaceae</taxon>
        <taxon>Saccharolobus</taxon>
    </lineage>
</organism>
<protein>
    <recommendedName>
        <fullName evidence="1">Aspartate carbamoyltransferase catalytic subunit</fullName>
        <ecNumber evidence="1">2.1.3.2</ecNumber>
    </recommendedName>
    <alternativeName>
        <fullName evidence="1">Aspartate transcarbamylase</fullName>
        <shortName evidence="1">ATCase</shortName>
    </alternativeName>
</protein>
<dbReference type="EC" id="2.1.3.2" evidence="1"/>
<dbReference type="EMBL" id="CP001402">
    <property type="protein sequence ID" value="ACR42116.1"/>
    <property type="molecule type" value="Genomic_DNA"/>
</dbReference>
<dbReference type="RefSeq" id="WP_012735965.1">
    <property type="nucleotide sequence ID" value="NC_012726.1"/>
</dbReference>
<dbReference type="SMR" id="C4KHQ2"/>
<dbReference type="GeneID" id="84058925"/>
<dbReference type="KEGG" id="sid:M164_1515"/>
<dbReference type="HOGENOM" id="CLU_043846_1_2_2"/>
<dbReference type="UniPathway" id="UPA00070">
    <property type="reaction ID" value="UER00116"/>
</dbReference>
<dbReference type="Proteomes" id="UP000001479">
    <property type="component" value="Chromosome"/>
</dbReference>
<dbReference type="GO" id="GO:0016597">
    <property type="term" value="F:amino acid binding"/>
    <property type="evidence" value="ECO:0007669"/>
    <property type="project" value="InterPro"/>
</dbReference>
<dbReference type="GO" id="GO:0004070">
    <property type="term" value="F:aspartate carbamoyltransferase activity"/>
    <property type="evidence" value="ECO:0007669"/>
    <property type="project" value="UniProtKB-UniRule"/>
</dbReference>
<dbReference type="GO" id="GO:0006207">
    <property type="term" value="P:'de novo' pyrimidine nucleobase biosynthetic process"/>
    <property type="evidence" value="ECO:0007669"/>
    <property type="project" value="InterPro"/>
</dbReference>
<dbReference type="GO" id="GO:0044205">
    <property type="term" value="P:'de novo' UMP biosynthetic process"/>
    <property type="evidence" value="ECO:0007669"/>
    <property type="project" value="UniProtKB-UniRule"/>
</dbReference>
<dbReference type="GO" id="GO:0006520">
    <property type="term" value="P:amino acid metabolic process"/>
    <property type="evidence" value="ECO:0007669"/>
    <property type="project" value="InterPro"/>
</dbReference>
<dbReference type="FunFam" id="3.40.50.1370:FF:000021">
    <property type="entry name" value="Aspartate carbamoyltransferase"/>
    <property type="match status" value="1"/>
</dbReference>
<dbReference type="Gene3D" id="3.40.50.1370">
    <property type="entry name" value="Aspartate/ornithine carbamoyltransferase"/>
    <property type="match status" value="2"/>
</dbReference>
<dbReference type="HAMAP" id="MF_00001">
    <property type="entry name" value="Asp_carb_tr"/>
    <property type="match status" value="1"/>
</dbReference>
<dbReference type="InterPro" id="IPR006132">
    <property type="entry name" value="Asp/Orn_carbamoyltranf_P-bd"/>
</dbReference>
<dbReference type="InterPro" id="IPR006130">
    <property type="entry name" value="Asp/Orn_carbamoylTrfase"/>
</dbReference>
<dbReference type="InterPro" id="IPR036901">
    <property type="entry name" value="Asp/Orn_carbamoylTrfase_sf"/>
</dbReference>
<dbReference type="InterPro" id="IPR002082">
    <property type="entry name" value="Asp_carbamoyltransf"/>
</dbReference>
<dbReference type="InterPro" id="IPR006131">
    <property type="entry name" value="Asp_carbamoyltransf_Asp/Orn-bd"/>
</dbReference>
<dbReference type="NCBIfam" id="TIGR00670">
    <property type="entry name" value="asp_carb_tr"/>
    <property type="match status" value="1"/>
</dbReference>
<dbReference type="NCBIfam" id="NF002032">
    <property type="entry name" value="PRK00856.1"/>
    <property type="match status" value="1"/>
</dbReference>
<dbReference type="PANTHER" id="PTHR45753:SF6">
    <property type="entry name" value="ASPARTATE CARBAMOYLTRANSFERASE"/>
    <property type="match status" value="1"/>
</dbReference>
<dbReference type="PANTHER" id="PTHR45753">
    <property type="entry name" value="ORNITHINE CARBAMOYLTRANSFERASE, MITOCHONDRIAL"/>
    <property type="match status" value="1"/>
</dbReference>
<dbReference type="Pfam" id="PF00185">
    <property type="entry name" value="OTCace"/>
    <property type="match status" value="1"/>
</dbReference>
<dbReference type="Pfam" id="PF02729">
    <property type="entry name" value="OTCace_N"/>
    <property type="match status" value="1"/>
</dbReference>
<dbReference type="PRINTS" id="PR00100">
    <property type="entry name" value="AOTCASE"/>
</dbReference>
<dbReference type="PRINTS" id="PR00101">
    <property type="entry name" value="ATCASE"/>
</dbReference>
<dbReference type="SUPFAM" id="SSF53671">
    <property type="entry name" value="Aspartate/ornithine carbamoyltransferase"/>
    <property type="match status" value="1"/>
</dbReference>
<dbReference type="PROSITE" id="PS00097">
    <property type="entry name" value="CARBAMOYLTRANSFERASE"/>
    <property type="match status" value="1"/>
</dbReference>
<feature type="chain" id="PRO_1000201602" description="Aspartate carbamoyltransferase catalytic subunit">
    <location>
        <begin position="1"/>
        <end position="303"/>
    </location>
</feature>
<feature type="binding site" evidence="1">
    <location>
        <position position="51"/>
    </location>
    <ligand>
        <name>carbamoyl phosphate</name>
        <dbReference type="ChEBI" id="CHEBI:58228"/>
    </ligand>
</feature>
<feature type="binding site" evidence="1">
    <location>
        <position position="52"/>
    </location>
    <ligand>
        <name>carbamoyl phosphate</name>
        <dbReference type="ChEBI" id="CHEBI:58228"/>
    </ligand>
</feature>
<feature type="binding site" evidence="1">
    <location>
        <position position="80"/>
    </location>
    <ligand>
        <name>L-aspartate</name>
        <dbReference type="ChEBI" id="CHEBI:29991"/>
    </ligand>
</feature>
<feature type="binding site" evidence="1">
    <location>
        <position position="101"/>
    </location>
    <ligand>
        <name>carbamoyl phosphate</name>
        <dbReference type="ChEBI" id="CHEBI:58228"/>
    </ligand>
</feature>
<feature type="binding site" evidence="1">
    <location>
        <position position="129"/>
    </location>
    <ligand>
        <name>carbamoyl phosphate</name>
        <dbReference type="ChEBI" id="CHEBI:58228"/>
    </ligand>
</feature>
<feature type="binding site" evidence="1">
    <location>
        <position position="132"/>
    </location>
    <ligand>
        <name>carbamoyl phosphate</name>
        <dbReference type="ChEBI" id="CHEBI:58228"/>
    </ligand>
</feature>
<feature type="binding site" evidence="1">
    <location>
        <position position="162"/>
    </location>
    <ligand>
        <name>L-aspartate</name>
        <dbReference type="ChEBI" id="CHEBI:29991"/>
    </ligand>
</feature>
<feature type="binding site" evidence="1">
    <location>
        <position position="221"/>
    </location>
    <ligand>
        <name>L-aspartate</name>
        <dbReference type="ChEBI" id="CHEBI:29991"/>
    </ligand>
</feature>
<feature type="binding site" evidence="1">
    <location>
        <position position="260"/>
    </location>
    <ligand>
        <name>carbamoyl phosphate</name>
        <dbReference type="ChEBI" id="CHEBI:58228"/>
    </ligand>
</feature>
<feature type="binding site" evidence="1">
    <location>
        <position position="261"/>
    </location>
    <ligand>
        <name>carbamoyl phosphate</name>
        <dbReference type="ChEBI" id="CHEBI:58228"/>
    </ligand>
</feature>
<name>PYRB_SACI6</name>
<comment type="function">
    <text evidence="1">Catalyzes the condensation of carbamoyl phosphate and aspartate to form carbamoyl aspartate and inorganic phosphate, the committed step in the de novo pyrimidine nucleotide biosynthesis pathway.</text>
</comment>
<comment type="catalytic activity">
    <reaction evidence="1">
        <text>carbamoyl phosphate + L-aspartate = N-carbamoyl-L-aspartate + phosphate + H(+)</text>
        <dbReference type="Rhea" id="RHEA:20013"/>
        <dbReference type="ChEBI" id="CHEBI:15378"/>
        <dbReference type="ChEBI" id="CHEBI:29991"/>
        <dbReference type="ChEBI" id="CHEBI:32814"/>
        <dbReference type="ChEBI" id="CHEBI:43474"/>
        <dbReference type="ChEBI" id="CHEBI:58228"/>
        <dbReference type="EC" id="2.1.3.2"/>
    </reaction>
</comment>
<comment type="pathway">
    <text evidence="1">Pyrimidine metabolism; UMP biosynthesis via de novo pathway; (S)-dihydroorotate from bicarbonate: step 2/3.</text>
</comment>
<comment type="subunit">
    <text evidence="1">Heterooligomer of catalytic and regulatory chains.</text>
</comment>
<comment type="similarity">
    <text evidence="1">Belongs to the aspartate/ornithine carbamoyltransferase superfamily. ATCase family.</text>
</comment>
<evidence type="ECO:0000255" key="1">
    <source>
        <dbReference type="HAMAP-Rule" id="MF_00001"/>
    </source>
</evidence>
<reference key="1">
    <citation type="journal article" date="2009" name="Proc. Natl. Acad. Sci. U.S.A.">
        <title>Biogeography of the Sulfolobus islandicus pan-genome.</title>
        <authorList>
            <person name="Reno M.L."/>
            <person name="Held N.L."/>
            <person name="Fields C.J."/>
            <person name="Burke P.V."/>
            <person name="Whitaker R.J."/>
        </authorList>
    </citation>
    <scope>NUCLEOTIDE SEQUENCE [LARGE SCALE GENOMIC DNA]</scope>
    <source>
        <strain>M.16.4 / Kamchatka #3</strain>
    </source>
</reference>
<gene>
    <name evidence="1" type="primary">pyrB</name>
    <name type="ordered locus">M164_1515</name>
</gene>
<sequence>MRLRHVVSSLDLTRDDYFRIFELADKFSNVKKLNYLSGKVVSLAFFEPSTRTAQSFHTAAIKLGADVIGFASEESTSIAKGENLADTIRMLNNYSNCIVMRHKFDGAALFASEISDIPIINAGDGKHEHPTQALIDLYTIYKVFGEIDGRTFGLLGDLKYARTVNSLLRALTRFKPKKVFLISPSQLKVRREILDGLNYPVIETENPYDVIQDIDVLYVTRIQKERFVDEVEYEKVKESYVVDLKLVNMMKKDGIILHPLPRVTEIDRKVDKTTNAKYFYQASLAVPLRMALFYEVLGERKDD</sequence>